<comment type="function">
    <text evidence="1">F(1)F(0) ATP synthase produces ATP from ADP in the presence of a proton or sodium gradient. F-type ATPases consist of two structural domains, F(1) containing the extramembraneous catalytic core and F(0) containing the membrane proton channel, linked together by a central stalk and a peripheral stalk. During catalysis, ATP synthesis in the catalytic domain of F(1) is coupled via a rotary mechanism of the central stalk subunits to proton translocation.</text>
</comment>
<comment type="function">
    <text evidence="1">Component of the F(0) channel, it forms part of the peripheral stalk, linking F(1) to F(0).</text>
</comment>
<comment type="subunit">
    <text evidence="1">F-type ATPases have 2 components, F(1) - the catalytic core - and F(0) - the membrane proton channel. F(1) has five subunits: alpha(3), beta(3), gamma(1), delta(1), epsilon(1). F(0) has three main subunits: a(1), b(2) and c(10-14). The alpha and beta chains form an alternating ring which encloses part of the gamma chain. F(1) is attached to F(0) by a central stalk formed by the gamma and epsilon chains, while a peripheral stalk is formed by the delta and b chains.</text>
</comment>
<comment type="subcellular location">
    <subcellularLocation>
        <location evidence="1">Cell inner membrane</location>
        <topology evidence="1">Single-pass membrane protein</topology>
    </subcellularLocation>
</comment>
<comment type="similarity">
    <text evidence="1">Belongs to the ATPase B chain family.</text>
</comment>
<proteinExistence type="inferred from homology"/>
<keyword id="KW-0066">ATP synthesis</keyword>
<keyword id="KW-0997">Cell inner membrane</keyword>
<keyword id="KW-1003">Cell membrane</keyword>
<keyword id="KW-0138">CF(0)</keyword>
<keyword id="KW-0375">Hydrogen ion transport</keyword>
<keyword id="KW-0406">Ion transport</keyword>
<keyword id="KW-0472">Membrane</keyword>
<keyword id="KW-0812">Transmembrane</keyword>
<keyword id="KW-1133">Transmembrane helix</keyword>
<keyword id="KW-0813">Transport</keyword>
<protein>
    <recommendedName>
        <fullName evidence="1">ATP synthase subunit b</fullName>
    </recommendedName>
    <alternativeName>
        <fullName evidence="1">ATP synthase F(0) sector subunit b</fullName>
    </alternativeName>
    <alternativeName>
        <fullName evidence="1">ATPase subunit I</fullName>
    </alternativeName>
    <alternativeName>
        <fullName evidence="1">F-type ATPase subunit b</fullName>
        <shortName evidence="1">F-ATPase subunit b</shortName>
    </alternativeName>
</protein>
<sequence>MHFLDESFWLAISFIIFVYLIYRPAKKAILKSLDMKVLEVQERVLKAEKLKDDAKLLFEQTEEQIKNLEALQLQMTKENNEITEKIVQEKTKEIEEFLEHKKVETIKLIESQKLLASKELQDEFSDEVVKLVSEYFHSTKNNNLSETDIAKNLMDKV</sequence>
<feature type="chain" id="PRO_0000288722" description="ATP synthase subunit b">
    <location>
        <begin position="1"/>
        <end position="157"/>
    </location>
</feature>
<feature type="transmembrane region" description="Helical" evidence="1">
    <location>
        <begin position="1"/>
        <end position="21"/>
    </location>
</feature>
<accession>Q1RGZ0</accession>
<reference key="1">
    <citation type="journal article" date="2006" name="PLoS Genet.">
        <title>Genome sequence of Rickettsia bellii illuminates the role of amoebae in gene exchanges between intracellular pathogens.</title>
        <authorList>
            <person name="Ogata H."/>
            <person name="La Scola B."/>
            <person name="Audic S."/>
            <person name="Renesto P."/>
            <person name="Blanc G."/>
            <person name="Robert C."/>
            <person name="Fournier P.-E."/>
            <person name="Claverie J.-M."/>
            <person name="Raoult D."/>
        </authorList>
    </citation>
    <scope>NUCLEOTIDE SEQUENCE [LARGE SCALE GENOMIC DNA]</scope>
    <source>
        <strain>RML369-C</strain>
    </source>
</reference>
<gene>
    <name evidence="1" type="primary">atpF</name>
    <name type="ordered locus">RBE_1293</name>
</gene>
<evidence type="ECO:0000255" key="1">
    <source>
        <dbReference type="HAMAP-Rule" id="MF_01398"/>
    </source>
</evidence>
<dbReference type="EMBL" id="CP000087">
    <property type="protein sequence ID" value="ABE05374.1"/>
    <property type="molecule type" value="Genomic_DNA"/>
</dbReference>
<dbReference type="RefSeq" id="WP_011477944.1">
    <property type="nucleotide sequence ID" value="NC_007940.1"/>
</dbReference>
<dbReference type="SMR" id="Q1RGZ0"/>
<dbReference type="KEGG" id="rbe:RBE_1293"/>
<dbReference type="eggNOG" id="COG0711">
    <property type="taxonomic scope" value="Bacteria"/>
</dbReference>
<dbReference type="HOGENOM" id="CLU_1676510_0_0_5"/>
<dbReference type="OrthoDB" id="7161077at2"/>
<dbReference type="Proteomes" id="UP000001951">
    <property type="component" value="Chromosome"/>
</dbReference>
<dbReference type="GO" id="GO:0005886">
    <property type="term" value="C:plasma membrane"/>
    <property type="evidence" value="ECO:0007669"/>
    <property type="project" value="UniProtKB-SubCell"/>
</dbReference>
<dbReference type="GO" id="GO:0045259">
    <property type="term" value="C:proton-transporting ATP synthase complex"/>
    <property type="evidence" value="ECO:0007669"/>
    <property type="project" value="UniProtKB-KW"/>
</dbReference>
<dbReference type="GO" id="GO:0046933">
    <property type="term" value="F:proton-transporting ATP synthase activity, rotational mechanism"/>
    <property type="evidence" value="ECO:0007669"/>
    <property type="project" value="UniProtKB-UniRule"/>
</dbReference>
<dbReference type="CDD" id="cd06503">
    <property type="entry name" value="ATP-synt_Fo_b"/>
    <property type="match status" value="1"/>
</dbReference>
<dbReference type="HAMAP" id="MF_01398">
    <property type="entry name" value="ATP_synth_b_bprime"/>
    <property type="match status" value="1"/>
</dbReference>
<dbReference type="InterPro" id="IPR002146">
    <property type="entry name" value="ATP_synth_b/b'su_bac/chlpt"/>
</dbReference>
<dbReference type="NCBIfam" id="NF005129">
    <property type="entry name" value="PRK06568.1"/>
    <property type="match status" value="1"/>
</dbReference>
<dbReference type="Pfam" id="PF00430">
    <property type="entry name" value="ATP-synt_B"/>
    <property type="match status" value="1"/>
</dbReference>
<name>ATPF_RICBR</name>
<organism>
    <name type="scientific">Rickettsia bellii (strain RML369-C)</name>
    <dbReference type="NCBI Taxonomy" id="336407"/>
    <lineage>
        <taxon>Bacteria</taxon>
        <taxon>Pseudomonadati</taxon>
        <taxon>Pseudomonadota</taxon>
        <taxon>Alphaproteobacteria</taxon>
        <taxon>Rickettsiales</taxon>
        <taxon>Rickettsiaceae</taxon>
        <taxon>Rickettsieae</taxon>
        <taxon>Rickettsia</taxon>
        <taxon>belli group</taxon>
    </lineage>
</organism>